<reference key="1">
    <citation type="submission" date="2008-07" db="EMBL/GenBank/DDBJ databases">
        <title>Complete sequence of Geobacter bemidjiensis BEM.</title>
        <authorList>
            <consortium name="US DOE Joint Genome Institute"/>
            <person name="Lucas S."/>
            <person name="Copeland A."/>
            <person name="Lapidus A."/>
            <person name="Glavina del Rio T."/>
            <person name="Dalin E."/>
            <person name="Tice H."/>
            <person name="Bruce D."/>
            <person name="Goodwin L."/>
            <person name="Pitluck S."/>
            <person name="Kiss H."/>
            <person name="Brettin T."/>
            <person name="Detter J.C."/>
            <person name="Han C."/>
            <person name="Kuske C.R."/>
            <person name="Schmutz J."/>
            <person name="Larimer F."/>
            <person name="Land M."/>
            <person name="Hauser L."/>
            <person name="Kyrpides N."/>
            <person name="Lykidis A."/>
            <person name="Lovley D."/>
            <person name="Richardson P."/>
        </authorList>
    </citation>
    <scope>NUCLEOTIDE SEQUENCE [LARGE SCALE GENOMIC DNA]</scope>
    <source>
        <strain>ATCC BAA-1014 / DSM 16622 / JCM 12645 / Bem</strain>
    </source>
</reference>
<organism>
    <name type="scientific">Citrifermentans bemidjiense (strain ATCC BAA-1014 / DSM 16622 / JCM 12645 / Bem)</name>
    <name type="common">Geobacter bemidjiensis</name>
    <dbReference type="NCBI Taxonomy" id="404380"/>
    <lineage>
        <taxon>Bacteria</taxon>
        <taxon>Pseudomonadati</taxon>
        <taxon>Thermodesulfobacteriota</taxon>
        <taxon>Desulfuromonadia</taxon>
        <taxon>Geobacterales</taxon>
        <taxon>Geobacteraceae</taxon>
        <taxon>Citrifermentans</taxon>
    </lineage>
</organism>
<name>MUTL_CITBB</name>
<feature type="chain" id="PRO_1000096654" description="DNA mismatch repair protein MutL">
    <location>
        <begin position="1"/>
        <end position="647"/>
    </location>
</feature>
<feature type="region of interest" description="Disordered" evidence="2">
    <location>
        <begin position="356"/>
        <end position="391"/>
    </location>
</feature>
<feature type="region of interest" description="Disordered" evidence="2">
    <location>
        <begin position="407"/>
        <end position="428"/>
    </location>
</feature>
<feature type="compositionally biased region" description="Polar residues" evidence="2">
    <location>
        <begin position="413"/>
        <end position="423"/>
    </location>
</feature>
<proteinExistence type="inferred from homology"/>
<sequence>MATKIRILPENLTNKIAAGEVVERPASVAKELVENALDAGSKEVVVEIESGGRRLIKVSDTGCGMSRDDALLALERHATSKIATDEDLFSLCTLGFRGEALPSVASVSRLTISTRTSDSVEGTEIYAEGGRIKEVKECGMAVGTVISVRNLFFNTPARLKFMKSAETEGGHVGELLTRLAISRPEVRFTYKNDGKVVFRALDADLKERVATMLGRSIASFLYPVSYQEGGLKVSGLVAAPECSRSAGSHLYTYINGRFIKDKVVQHAILQAYRNFLERGRYPVVAVFIEIAPGEVDVNVHPTKHEVRFREQGRVHDAIQNAVESVLKETPWLKRPAVAAVSRPTEKDAAAARAVLEGSQAPLPVTPQPRPALTSEKPVPAPQAQPQQSSISEARVAEVRELLVDFQPRPQPSLRPQYQGSVTSKEALPYAPMAAPVPVREPETAAPEPDPAAAGYFSSLGVIGQFNASYILCQRGTDLVLIDQHAAHERVAFEKLKGQFAGREVDSQGLLFPETMEFSFRESAVLREHLAELARLGFEFEEFGGNTWLLKGVPQVLSATRYVDTIRDILEELGSLSRSRAFSDIQEDLLARIACHSVVRGKRTLSQVEITALFKQMDETDFSSNCPHGRPVMQTLTLAEVEKMFKRI</sequence>
<protein>
    <recommendedName>
        <fullName evidence="1">DNA mismatch repair protein MutL</fullName>
    </recommendedName>
</protein>
<accession>B5EGD4</accession>
<comment type="function">
    <text evidence="1">This protein is involved in the repair of mismatches in DNA. It is required for dam-dependent methyl-directed DNA mismatch repair. May act as a 'molecular matchmaker', a protein that promotes the formation of a stable complex between two or more DNA-binding proteins in an ATP-dependent manner without itself being part of a final effector complex.</text>
</comment>
<comment type="similarity">
    <text evidence="1">Belongs to the DNA mismatch repair MutL/HexB family.</text>
</comment>
<evidence type="ECO:0000255" key="1">
    <source>
        <dbReference type="HAMAP-Rule" id="MF_00149"/>
    </source>
</evidence>
<evidence type="ECO:0000256" key="2">
    <source>
        <dbReference type="SAM" id="MobiDB-lite"/>
    </source>
</evidence>
<keyword id="KW-0227">DNA damage</keyword>
<keyword id="KW-0234">DNA repair</keyword>
<keyword id="KW-1185">Reference proteome</keyword>
<dbReference type="EMBL" id="CP001124">
    <property type="protein sequence ID" value="ACH37999.1"/>
    <property type="molecule type" value="Genomic_DNA"/>
</dbReference>
<dbReference type="RefSeq" id="WP_012529412.1">
    <property type="nucleotide sequence ID" value="NC_011146.1"/>
</dbReference>
<dbReference type="SMR" id="B5EGD4"/>
<dbReference type="STRING" id="404380.Gbem_0978"/>
<dbReference type="KEGG" id="gbm:Gbem_0978"/>
<dbReference type="eggNOG" id="COG0323">
    <property type="taxonomic scope" value="Bacteria"/>
</dbReference>
<dbReference type="HOGENOM" id="CLU_004131_4_2_7"/>
<dbReference type="OrthoDB" id="9763467at2"/>
<dbReference type="Proteomes" id="UP000008825">
    <property type="component" value="Chromosome"/>
</dbReference>
<dbReference type="GO" id="GO:0032300">
    <property type="term" value="C:mismatch repair complex"/>
    <property type="evidence" value="ECO:0007669"/>
    <property type="project" value="InterPro"/>
</dbReference>
<dbReference type="GO" id="GO:0005524">
    <property type="term" value="F:ATP binding"/>
    <property type="evidence" value="ECO:0007669"/>
    <property type="project" value="InterPro"/>
</dbReference>
<dbReference type="GO" id="GO:0016887">
    <property type="term" value="F:ATP hydrolysis activity"/>
    <property type="evidence" value="ECO:0007669"/>
    <property type="project" value="InterPro"/>
</dbReference>
<dbReference type="GO" id="GO:0140664">
    <property type="term" value="F:ATP-dependent DNA damage sensor activity"/>
    <property type="evidence" value="ECO:0007669"/>
    <property type="project" value="InterPro"/>
</dbReference>
<dbReference type="GO" id="GO:0030983">
    <property type="term" value="F:mismatched DNA binding"/>
    <property type="evidence" value="ECO:0007669"/>
    <property type="project" value="InterPro"/>
</dbReference>
<dbReference type="GO" id="GO:0006298">
    <property type="term" value="P:mismatch repair"/>
    <property type="evidence" value="ECO:0007669"/>
    <property type="project" value="UniProtKB-UniRule"/>
</dbReference>
<dbReference type="CDD" id="cd16926">
    <property type="entry name" value="HATPase_MutL-MLH-PMS-like"/>
    <property type="match status" value="1"/>
</dbReference>
<dbReference type="CDD" id="cd00782">
    <property type="entry name" value="MutL_Trans"/>
    <property type="match status" value="1"/>
</dbReference>
<dbReference type="FunFam" id="3.30.565.10:FF:000003">
    <property type="entry name" value="DNA mismatch repair endonuclease MutL"/>
    <property type="match status" value="1"/>
</dbReference>
<dbReference type="Gene3D" id="3.30.230.10">
    <property type="match status" value="1"/>
</dbReference>
<dbReference type="Gene3D" id="3.30.565.10">
    <property type="entry name" value="Histidine kinase-like ATPase, C-terminal domain"/>
    <property type="match status" value="1"/>
</dbReference>
<dbReference type="Gene3D" id="3.30.1540.20">
    <property type="entry name" value="MutL, C-terminal domain, dimerisation subdomain"/>
    <property type="match status" value="1"/>
</dbReference>
<dbReference type="Gene3D" id="3.30.1370.100">
    <property type="entry name" value="MutL, C-terminal domain, regulatory subdomain"/>
    <property type="match status" value="1"/>
</dbReference>
<dbReference type="HAMAP" id="MF_00149">
    <property type="entry name" value="DNA_mis_repair"/>
    <property type="match status" value="1"/>
</dbReference>
<dbReference type="InterPro" id="IPR014762">
    <property type="entry name" value="DNA_mismatch_repair_CS"/>
</dbReference>
<dbReference type="InterPro" id="IPR020667">
    <property type="entry name" value="DNA_mismatch_repair_MutL"/>
</dbReference>
<dbReference type="InterPro" id="IPR013507">
    <property type="entry name" value="DNA_mismatch_S5_2-like"/>
</dbReference>
<dbReference type="InterPro" id="IPR036890">
    <property type="entry name" value="HATPase_C_sf"/>
</dbReference>
<dbReference type="InterPro" id="IPR002099">
    <property type="entry name" value="MutL/Mlh/PMS"/>
</dbReference>
<dbReference type="InterPro" id="IPR038973">
    <property type="entry name" value="MutL/Mlh/Pms-like"/>
</dbReference>
<dbReference type="InterPro" id="IPR014790">
    <property type="entry name" value="MutL_C"/>
</dbReference>
<dbReference type="InterPro" id="IPR042120">
    <property type="entry name" value="MutL_C_dimsub"/>
</dbReference>
<dbReference type="InterPro" id="IPR042121">
    <property type="entry name" value="MutL_C_regsub"/>
</dbReference>
<dbReference type="InterPro" id="IPR037198">
    <property type="entry name" value="MutL_C_sf"/>
</dbReference>
<dbReference type="InterPro" id="IPR020568">
    <property type="entry name" value="Ribosomal_Su5_D2-typ_SF"/>
</dbReference>
<dbReference type="InterPro" id="IPR014721">
    <property type="entry name" value="Ribsml_uS5_D2-typ_fold_subgr"/>
</dbReference>
<dbReference type="NCBIfam" id="TIGR00585">
    <property type="entry name" value="mutl"/>
    <property type="match status" value="1"/>
</dbReference>
<dbReference type="PANTHER" id="PTHR10073">
    <property type="entry name" value="DNA MISMATCH REPAIR PROTEIN MLH, PMS, MUTL"/>
    <property type="match status" value="1"/>
</dbReference>
<dbReference type="PANTHER" id="PTHR10073:SF12">
    <property type="entry name" value="DNA MISMATCH REPAIR PROTEIN MLH1"/>
    <property type="match status" value="1"/>
</dbReference>
<dbReference type="Pfam" id="PF01119">
    <property type="entry name" value="DNA_mis_repair"/>
    <property type="match status" value="1"/>
</dbReference>
<dbReference type="Pfam" id="PF13589">
    <property type="entry name" value="HATPase_c_3"/>
    <property type="match status" value="1"/>
</dbReference>
<dbReference type="Pfam" id="PF08676">
    <property type="entry name" value="MutL_C"/>
    <property type="match status" value="1"/>
</dbReference>
<dbReference type="SMART" id="SM01340">
    <property type="entry name" value="DNA_mis_repair"/>
    <property type="match status" value="1"/>
</dbReference>
<dbReference type="SMART" id="SM00853">
    <property type="entry name" value="MutL_C"/>
    <property type="match status" value="1"/>
</dbReference>
<dbReference type="SUPFAM" id="SSF55874">
    <property type="entry name" value="ATPase domain of HSP90 chaperone/DNA topoisomerase II/histidine kinase"/>
    <property type="match status" value="1"/>
</dbReference>
<dbReference type="SUPFAM" id="SSF118116">
    <property type="entry name" value="DNA mismatch repair protein MutL"/>
    <property type="match status" value="1"/>
</dbReference>
<dbReference type="SUPFAM" id="SSF54211">
    <property type="entry name" value="Ribosomal protein S5 domain 2-like"/>
    <property type="match status" value="1"/>
</dbReference>
<dbReference type="PROSITE" id="PS00058">
    <property type="entry name" value="DNA_MISMATCH_REPAIR_1"/>
    <property type="match status" value="1"/>
</dbReference>
<gene>
    <name evidence="1" type="primary">mutL</name>
    <name type="ordered locus">Gbem_0978</name>
</gene>